<organism>
    <name type="scientific">Yersinia enterocolitica serotype O:8 / biotype 1B (strain NCTC 13174 / 8081)</name>
    <dbReference type="NCBI Taxonomy" id="393305"/>
    <lineage>
        <taxon>Bacteria</taxon>
        <taxon>Pseudomonadati</taxon>
        <taxon>Pseudomonadota</taxon>
        <taxon>Gammaproteobacteria</taxon>
        <taxon>Enterobacterales</taxon>
        <taxon>Yersiniaceae</taxon>
        <taxon>Yersinia</taxon>
    </lineage>
</organism>
<protein>
    <recommendedName>
        <fullName evidence="1">Serine hydroxymethyltransferase</fullName>
        <shortName evidence="1">SHMT</shortName>
        <shortName evidence="1">Serine methylase</shortName>
        <ecNumber evidence="1">2.1.2.1</ecNumber>
    </recommendedName>
</protein>
<dbReference type="EC" id="2.1.2.1" evidence="1"/>
<dbReference type="EMBL" id="AM286415">
    <property type="protein sequence ID" value="CAL11146.1"/>
    <property type="molecule type" value="Genomic_DNA"/>
</dbReference>
<dbReference type="RefSeq" id="WP_011815772.1">
    <property type="nucleotide sequence ID" value="NC_008800.1"/>
</dbReference>
<dbReference type="RefSeq" id="YP_001005381.1">
    <property type="nucleotide sequence ID" value="NC_008800.1"/>
</dbReference>
<dbReference type="SMR" id="A1JKP3"/>
<dbReference type="KEGG" id="yen:YE1047"/>
<dbReference type="PATRIC" id="fig|393305.7.peg.1145"/>
<dbReference type="eggNOG" id="COG0112">
    <property type="taxonomic scope" value="Bacteria"/>
</dbReference>
<dbReference type="HOGENOM" id="CLU_022477_2_1_6"/>
<dbReference type="OrthoDB" id="9803846at2"/>
<dbReference type="UniPathway" id="UPA00193"/>
<dbReference type="UniPathway" id="UPA00288">
    <property type="reaction ID" value="UER01023"/>
</dbReference>
<dbReference type="Proteomes" id="UP000000642">
    <property type="component" value="Chromosome"/>
</dbReference>
<dbReference type="GO" id="GO:0005829">
    <property type="term" value="C:cytosol"/>
    <property type="evidence" value="ECO:0007669"/>
    <property type="project" value="TreeGrafter"/>
</dbReference>
<dbReference type="GO" id="GO:0004372">
    <property type="term" value="F:glycine hydroxymethyltransferase activity"/>
    <property type="evidence" value="ECO:0007669"/>
    <property type="project" value="UniProtKB-UniRule"/>
</dbReference>
<dbReference type="GO" id="GO:0030170">
    <property type="term" value="F:pyridoxal phosphate binding"/>
    <property type="evidence" value="ECO:0007669"/>
    <property type="project" value="UniProtKB-UniRule"/>
</dbReference>
<dbReference type="GO" id="GO:0019264">
    <property type="term" value="P:glycine biosynthetic process from serine"/>
    <property type="evidence" value="ECO:0007669"/>
    <property type="project" value="UniProtKB-UniRule"/>
</dbReference>
<dbReference type="GO" id="GO:0035999">
    <property type="term" value="P:tetrahydrofolate interconversion"/>
    <property type="evidence" value="ECO:0007669"/>
    <property type="project" value="UniProtKB-UniRule"/>
</dbReference>
<dbReference type="CDD" id="cd00378">
    <property type="entry name" value="SHMT"/>
    <property type="match status" value="1"/>
</dbReference>
<dbReference type="FunFam" id="3.40.640.10:FF:000001">
    <property type="entry name" value="Serine hydroxymethyltransferase"/>
    <property type="match status" value="1"/>
</dbReference>
<dbReference type="FunFam" id="3.90.1150.10:FF:000003">
    <property type="entry name" value="Serine hydroxymethyltransferase"/>
    <property type="match status" value="1"/>
</dbReference>
<dbReference type="Gene3D" id="3.90.1150.10">
    <property type="entry name" value="Aspartate Aminotransferase, domain 1"/>
    <property type="match status" value="1"/>
</dbReference>
<dbReference type="Gene3D" id="3.40.640.10">
    <property type="entry name" value="Type I PLP-dependent aspartate aminotransferase-like (Major domain)"/>
    <property type="match status" value="1"/>
</dbReference>
<dbReference type="HAMAP" id="MF_00051">
    <property type="entry name" value="SHMT"/>
    <property type="match status" value="1"/>
</dbReference>
<dbReference type="InterPro" id="IPR015424">
    <property type="entry name" value="PyrdxlP-dep_Trfase"/>
</dbReference>
<dbReference type="InterPro" id="IPR015421">
    <property type="entry name" value="PyrdxlP-dep_Trfase_major"/>
</dbReference>
<dbReference type="InterPro" id="IPR015422">
    <property type="entry name" value="PyrdxlP-dep_Trfase_small"/>
</dbReference>
<dbReference type="InterPro" id="IPR001085">
    <property type="entry name" value="Ser_HO-MeTrfase"/>
</dbReference>
<dbReference type="InterPro" id="IPR049943">
    <property type="entry name" value="Ser_HO-MeTrfase-like"/>
</dbReference>
<dbReference type="InterPro" id="IPR019798">
    <property type="entry name" value="Ser_HO-MeTrfase_PLP_BS"/>
</dbReference>
<dbReference type="InterPro" id="IPR039429">
    <property type="entry name" value="SHMT-like_dom"/>
</dbReference>
<dbReference type="NCBIfam" id="NF000586">
    <property type="entry name" value="PRK00011.1"/>
    <property type="match status" value="1"/>
</dbReference>
<dbReference type="PANTHER" id="PTHR11680">
    <property type="entry name" value="SERINE HYDROXYMETHYLTRANSFERASE"/>
    <property type="match status" value="1"/>
</dbReference>
<dbReference type="PANTHER" id="PTHR11680:SF50">
    <property type="entry name" value="SERINE HYDROXYMETHYLTRANSFERASE"/>
    <property type="match status" value="1"/>
</dbReference>
<dbReference type="Pfam" id="PF00464">
    <property type="entry name" value="SHMT"/>
    <property type="match status" value="1"/>
</dbReference>
<dbReference type="PIRSF" id="PIRSF000412">
    <property type="entry name" value="SHMT"/>
    <property type="match status" value="1"/>
</dbReference>
<dbReference type="SUPFAM" id="SSF53383">
    <property type="entry name" value="PLP-dependent transferases"/>
    <property type="match status" value="1"/>
</dbReference>
<dbReference type="PROSITE" id="PS00096">
    <property type="entry name" value="SHMT"/>
    <property type="match status" value="1"/>
</dbReference>
<evidence type="ECO:0000255" key="1">
    <source>
        <dbReference type="HAMAP-Rule" id="MF_00051"/>
    </source>
</evidence>
<accession>A1JKP3</accession>
<gene>
    <name evidence="1" type="primary">glyA</name>
    <name type="ordered locus">YE1047</name>
</gene>
<sequence length="417" mass="45551">MLKREMNIADYDADLWRAMEQEVVRQEEHIELIASENYTSPRVMQAQGSQLTNKYAEGYPGKRYYGGCEYVDIVEQLAIDRAKELFGADYANVQPHSGSQANVAVYSALLQPGDTVLGMNLAHGGHLTHGSPVNFSGKLYNIVPYGIDESGKIDYEDMASQAERYKPKMIIGGFSAYSGIVDWAKMREIADSIGAYFFVDMAHVAGLVAAGVYPNPVPHAHVVTTTTHKTLAGPRGGLILARGGDEELYKKLNSSVFPANQGGPLMHVIAGKAVALKEAMEPEFKVYQQQVAKNAKAMVAVFLERGYKVVSGGTDNHLFLLDLVDKNITGKDADAALGRANITVNKNSVPNDPKSPFVTSGVRIGSPAITRRGFKEEESRELAGWMCDVLDNITDEATIERIKQKVLAICARFPVYA</sequence>
<keyword id="KW-0028">Amino-acid biosynthesis</keyword>
<keyword id="KW-0963">Cytoplasm</keyword>
<keyword id="KW-0554">One-carbon metabolism</keyword>
<keyword id="KW-0663">Pyridoxal phosphate</keyword>
<keyword id="KW-0808">Transferase</keyword>
<reference key="1">
    <citation type="journal article" date="2006" name="PLoS Genet.">
        <title>The complete genome sequence and comparative genome analysis of the high pathogenicity Yersinia enterocolitica strain 8081.</title>
        <authorList>
            <person name="Thomson N.R."/>
            <person name="Howard S."/>
            <person name="Wren B.W."/>
            <person name="Holden M.T.G."/>
            <person name="Crossman L."/>
            <person name="Challis G.L."/>
            <person name="Churcher C."/>
            <person name="Mungall K."/>
            <person name="Brooks K."/>
            <person name="Chillingworth T."/>
            <person name="Feltwell T."/>
            <person name="Abdellah Z."/>
            <person name="Hauser H."/>
            <person name="Jagels K."/>
            <person name="Maddison M."/>
            <person name="Moule S."/>
            <person name="Sanders M."/>
            <person name="Whitehead S."/>
            <person name="Quail M.A."/>
            <person name="Dougan G."/>
            <person name="Parkhill J."/>
            <person name="Prentice M.B."/>
        </authorList>
    </citation>
    <scope>NUCLEOTIDE SEQUENCE [LARGE SCALE GENOMIC DNA]</scope>
    <source>
        <strain>NCTC 13174 / 8081</strain>
    </source>
</reference>
<comment type="function">
    <text evidence="1">Catalyzes the reversible interconversion of serine and glycine with tetrahydrofolate (THF) serving as the one-carbon carrier. This reaction serves as the major source of one-carbon groups required for the biosynthesis of purines, thymidylate, methionine, and other important biomolecules. Also exhibits THF-independent aldolase activity toward beta-hydroxyamino acids, producing glycine and aldehydes, via a retro-aldol mechanism.</text>
</comment>
<comment type="catalytic activity">
    <reaction evidence="1">
        <text>(6R)-5,10-methylene-5,6,7,8-tetrahydrofolate + glycine + H2O = (6S)-5,6,7,8-tetrahydrofolate + L-serine</text>
        <dbReference type="Rhea" id="RHEA:15481"/>
        <dbReference type="ChEBI" id="CHEBI:15377"/>
        <dbReference type="ChEBI" id="CHEBI:15636"/>
        <dbReference type="ChEBI" id="CHEBI:33384"/>
        <dbReference type="ChEBI" id="CHEBI:57305"/>
        <dbReference type="ChEBI" id="CHEBI:57453"/>
        <dbReference type="EC" id="2.1.2.1"/>
    </reaction>
</comment>
<comment type="cofactor">
    <cofactor evidence="1">
        <name>pyridoxal 5'-phosphate</name>
        <dbReference type="ChEBI" id="CHEBI:597326"/>
    </cofactor>
</comment>
<comment type="pathway">
    <text evidence="1">One-carbon metabolism; tetrahydrofolate interconversion.</text>
</comment>
<comment type="pathway">
    <text evidence="1">Amino-acid biosynthesis; glycine biosynthesis; glycine from L-serine: step 1/1.</text>
</comment>
<comment type="subunit">
    <text evidence="1">Homodimer.</text>
</comment>
<comment type="subcellular location">
    <subcellularLocation>
        <location evidence="1">Cytoplasm</location>
    </subcellularLocation>
</comment>
<comment type="similarity">
    <text evidence="1">Belongs to the SHMT family.</text>
</comment>
<feature type="chain" id="PRO_1000006343" description="Serine hydroxymethyltransferase">
    <location>
        <begin position="1"/>
        <end position="417"/>
    </location>
</feature>
<feature type="binding site" evidence="1">
    <location>
        <position position="121"/>
    </location>
    <ligand>
        <name>(6S)-5,6,7,8-tetrahydrofolate</name>
        <dbReference type="ChEBI" id="CHEBI:57453"/>
    </ligand>
</feature>
<feature type="binding site" evidence="1">
    <location>
        <begin position="125"/>
        <end position="127"/>
    </location>
    <ligand>
        <name>(6S)-5,6,7,8-tetrahydrofolate</name>
        <dbReference type="ChEBI" id="CHEBI:57453"/>
    </ligand>
</feature>
<feature type="binding site" evidence="1">
    <location>
        <begin position="355"/>
        <end position="357"/>
    </location>
    <ligand>
        <name>(6S)-5,6,7,8-tetrahydrofolate</name>
        <dbReference type="ChEBI" id="CHEBI:57453"/>
    </ligand>
</feature>
<feature type="site" description="Plays an important role in substrate specificity" evidence="1">
    <location>
        <position position="228"/>
    </location>
</feature>
<feature type="modified residue" description="N6-(pyridoxal phosphate)lysine" evidence="1">
    <location>
        <position position="229"/>
    </location>
</feature>
<proteinExistence type="inferred from homology"/>
<name>GLYA_YERE8</name>